<accession>P32512</accession>
<keyword id="KW-0238">DNA-binding</keyword>
<keyword id="KW-0244">Early protein</keyword>
<keyword id="KW-0479">Metal-binding</keyword>
<keyword id="KW-1185">Reference proteome</keyword>
<keyword id="KW-0862">Zinc</keyword>
<keyword id="KW-0863">Zinc-finger</keyword>
<gene>
    <name type="primary">PE38</name>
    <name type="ORF">ORF152</name>
</gene>
<name>PE38_NPVOP</name>
<evidence type="ECO:0000255" key="1">
    <source>
        <dbReference type="PROSITE-ProRule" id="PRU00175"/>
    </source>
</evidence>
<dbReference type="EMBL" id="M83827">
    <property type="protein sequence ID" value="AAA46750.1"/>
    <property type="molecule type" value="Genomic_DNA"/>
</dbReference>
<dbReference type="EMBL" id="U75930">
    <property type="protein sequence ID" value="AAC59151.1"/>
    <property type="molecule type" value="Genomic_DNA"/>
</dbReference>
<dbReference type="PIR" id="A42191">
    <property type="entry name" value="WMNV38"/>
</dbReference>
<dbReference type="RefSeq" id="NP_046308.1">
    <property type="nucleotide sequence ID" value="NC_001875.2"/>
</dbReference>
<dbReference type="SMR" id="P32512"/>
<dbReference type="KEGG" id="vg:912005"/>
<dbReference type="OrthoDB" id="8064at10239"/>
<dbReference type="Proteomes" id="UP000009248">
    <property type="component" value="Genome"/>
</dbReference>
<dbReference type="GO" id="GO:0003677">
    <property type="term" value="F:DNA binding"/>
    <property type="evidence" value="ECO:0007669"/>
    <property type="project" value="UniProtKB-KW"/>
</dbReference>
<dbReference type="GO" id="GO:0008270">
    <property type="term" value="F:zinc ion binding"/>
    <property type="evidence" value="ECO:0007669"/>
    <property type="project" value="UniProtKB-KW"/>
</dbReference>
<dbReference type="Gene3D" id="3.30.40.10">
    <property type="entry name" value="Zinc/RING finger domain, C3HC4 (zinc finger)"/>
    <property type="match status" value="1"/>
</dbReference>
<dbReference type="InterPro" id="IPR018957">
    <property type="entry name" value="Znf_C3HC4_RING-type"/>
</dbReference>
<dbReference type="InterPro" id="IPR001841">
    <property type="entry name" value="Znf_RING"/>
</dbReference>
<dbReference type="InterPro" id="IPR013083">
    <property type="entry name" value="Znf_RING/FYVE/PHD"/>
</dbReference>
<dbReference type="InterPro" id="IPR017907">
    <property type="entry name" value="Znf_RING_CS"/>
</dbReference>
<dbReference type="Pfam" id="PF00097">
    <property type="entry name" value="zf-C3HC4"/>
    <property type="match status" value="1"/>
</dbReference>
<dbReference type="SMART" id="SM00184">
    <property type="entry name" value="RING"/>
    <property type="match status" value="1"/>
</dbReference>
<dbReference type="SUPFAM" id="SSF57850">
    <property type="entry name" value="RING/U-box"/>
    <property type="match status" value="1"/>
</dbReference>
<dbReference type="PROSITE" id="PS00518">
    <property type="entry name" value="ZF_RING_1"/>
    <property type="match status" value="1"/>
</dbReference>
<dbReference type="PROSITE" id="PS50089">
    <property type="entry name" value="ZF_RING_2"/>
    <property type="match status" value="1"/>
</dbReference>
<feature type="chain" id="PRO_0000056348" description="Major immediate early protein">
    <location>
        <begin position="1"/>
        <end position="307"/>
    </location>
</feature>
<feature type="zinc finger region" description="RING-type" evidence="1">
    <location>
        <begin position="39"/>
        <end position="92"/>
    </location>
</feature>
<reference key="1">
    <citation type="journal article" date="1992" name="Virology">
        <title>Tandemly repeated sequence at the 3' end of the IE-2 gene of the baculovirus Orgyia pseudotsugata multicapsid nuclear polyhedrosis virus is an enhancer element.</title>
        <authorList>
            <person name="Theilmann D.A."/>
            <person name="Stewart S."/>
        </authorList>
    </citation>
    <scope>NUCLEOTIDE SEQUENCE [GENOMIC DNA]</scope>
</reference>
<reference key="2">
    <citation type="journal article" date="1997" name="Virology">
        <title>The sequence of the Orgyia pseudotsugata multinucleocapsid nuclear polyhedrosis virus genome.</title>
        <authorList>
            <person name="Ahrens C.H."/>
            <person name="Russell R.R."/>
            <person name="Funk C.J."/>
            <person name="Evans J."/>
            <person name="Harwood S."/>
            <person name="Rohrmann G.F."/>
        </authorList>
    </citation>
    <scope>NUCLEOTIDE SEQUENCE [LARGE SCALE GENOMIC DNA]</scope>
</reference>
<organism>
    <name type="scientific">Orgyia pseudotsugata multicapsid polyhedrosis virus</name>
    <name type="common">OpMNPV</name>
    <dbReference type="NCBI Taxonomy" id="262177"/>
    <lineage>
        <taxon>Viruses</taxon>
        <taxon>Viruses incertae sedis</taxon>
        <taxon>Naldaviricetes</taxon>
        <taxon>Lefavirales</taxon>
        <taxon>Baculoviridae</taxon>
        <taxon>Alphabaculovirus</taxon>
        <taxon>Alphabaculovirus orpseudotsugatae</taxon>
    </lineage>
</organism>
<sequence length="307" mass="34714">MSSRYSPYRIRNVGERRRVQERLLSEFNSRPVTAVAAVCAVCLETYCVQSNNIIDFLMPSECTHLFCYKCVLNMYKNAMNVPRAAVSCPMCNKKVGTWQAFFPNSVVSCKFIKKTGDRTPACLQFMLALKTIQDRYMATEEEAETEPSFVIKNLQAQLDAAQKEARDLQESMERQKQAHNVAWNSSCEQVTALQTTLADMQAQLDRSEALSSTLAEHNRAANVQIDSLRRAVQRLEAAQSAPVSVNVEFNDNARQNTNLHERFRSYVYSTVSDMMIEDSIKSLQSHVFGAACLPCSVNVEINFPFDE</sequence>
<proteinExistence type="predicted"/>
<organismHost>
    <name type="scientific">Orgyia pseudotsugata</name>
    <name type="common">Douglas-fir tussock moth</name>
    <dbReference type="NCBI Taxonomy" id="33414"/>
</organismHost>
<protein>
    <recommendedName>
        <fullName>Major immediate early protein</fullName>
    </recommendedName>
    <alternativeName>
        <fullName>PE-38</fullName>
    </alternativeName>
</protein>